<protein>
    <recommendedName>
        <fullName evidence="1">ATP synthase epsilon chain</fullName>
    </recommendedName>
    <alternativeName>
        <fullName evidence="1">ATP synthase F1 sector epsilon subunit</fullName>
    </alternativeName>
    <alternativeName>
        <fullName evidence="1">F-ATPase epsilon subunit</fullName>
    </alternativeName>
</protein>
<accession>Q02BU0</accession>
<evidence type="ECO:0000255" key="1">
    <source>
        <dbReference type="HAMAP-Rule" id="MF_00530"/>
    </source>
</evidence>
<reference key="1">
    <citation type="journal article" date="2009" name="Appl. Environ. Microbiol.">
        <title>Three genomes from the phylum Acidobacteria provide insight into the lifestyles of these microorganisms in soils.</title>
        <authorList>
            <person name="Ward N.L."/>
            <person name="Challacombe J.F."/>
            <person name="Janssen P.H."/>
            <person name="Henrissat B."/>
            <person name="Coutinho P.M."/>
            <person name="Wu M."/>
            <person name="Xie G."/>
            <person name="Haft D.H."/>
            <person name="Sait M."/>
            <person name="Badger J."/>
            <person name="Barabote R.D."/>
            <person name="Bradley B."/>
            <person name="Brettin T.S."/>
            <person name="Brinkac L.M."/>
            <person name="Bruce D."/>
            <person name="Creasy T."/>
            <person name="Daugherty S.C."/>
            <person name="Davidsen T.M."/>
            <person name="DeBoy R.T."/>
            <person name="Detter J.C."/>
            <person name="Dodson R.J."/>
            <person name="Durkin A.S."/>
            <person name="Ganapathy A."/>
            <person name="Gwinn-Giglio M."/>
            <person name="Han C.S."/>
            <person name="Khouri H."/>
            <person name="Kiss H."/>
            <person name="Kothari S.P."/>
            <person name="Madupu R."/>
            <person name="Nelson K.E."/>
            <person name="Nelson W.C."/>
            <person name="Paulsen I."/>
            <person name="Penn K."/>
            <person name="Ren Q."/>
            <person name="Rosovitz M.J."/>
            <person name="Selengut J.D."/>
            <person name="Shrivastava S."/>
            <person name="Sullivan S.A."/>
            <person name="Tapia R."/>
            <person name="Thompson L.S."/>
            <person name="Watkins K.L."/>
            <person name="Yang Q."/>
            <person name="Yu C."/>
            <person name="Zafar N."/>
            <person name="Zhou L."/>
            <person name="Kuske C.R."/>
        </authorList>
    </citation>
    <scope>NUCLEOTIDE SEQUENCE [LARGE SCALE GENOMIC DNA]</scope>
    <source>
        <strain>Ellin6076</strain>
    </source>
</reference>
<feature type="chain" id="PRO_1000056538" description="ATP synthase epsilon chain">
    <location>
        <begin position="1"/>
        <end position="134"/>
    </location>
</feature>
<keyword id="KW-0066">ATP synthesis</keyword>
<keyword id="KW-0997">Cell inner membrane</keyword>
<keyword id="KW-1003">Cell membrane</keyword>
<keyword id="KW-0139">CF(1)</keyword>
<keyword id="KW-0375">Hydrogen ion transport</keyword>
<keyword id="KW-0406">Ion transport</keyword>
<keyword id="KW-0472">Membrane</keyword>
<keyword id="KW-0813">Transport</keyword>
<comment type="function">
    <text evidence="1">Produces ATP from ADP in the presence of a proton gradient across the membrane.</text>
</comment>
<comment type="subunit">
    <text evidence="1">F-type ATPases have 2 components, CF(1) - the catalytic core - and CF(0) - the membrane proton channel. CF(1) has five subunits: alpha(3), beta(3), gamma(1), delta(1), epsilon(1). CF(0) has three main subunits: a, b and c.</text>
</comment>
<comment type="subcellular location">
    <subcellularLocation>
        <location evidence="1">Cell inner membrane</location>
        <topology evidence="1">Peripheral membrane protein</topology>
    </subcellularLocation>
</comment>
<comment type="similarity">
    <text evidence="1">Belongs to the ATPase epsilon chain family.</text>
</comment>
<dbReference type="EMBL" id="CP000473">
    <property type="protein sequence ID" value="ABJ81476.1"/>
    <property type="molecule type" value="Genomic_DNA"/>
</dbReference>
<dbReference type="SMR" id="Q02BU0"/>
<dbReference type="FunCoup" id="Q02BU0">
    <property type="interactions" value="450"/>
</dbReference>
<dbReference type="STRING" id="234267.Acid_0466"/>
<dbReference type="KEGG" id="sus:Acid_0466"/>
<dbReference type="eggNOG" id="COG0355">
    <property type="taxonomic scope" value="Bacteria"/>
</dbReference>
<dbReference type="HOGENOM" id="CLU_084338_1_3_0"/>
<dbReference type="InParanoid" id="Q02BU0"/>
<dbReference type="OrthoDB" id="9804110at2"/>
<dbReference type="GO" id="GO:0005886">
    <property type="term" value="C:plasma membrane"/>
    <property type="evidence" value="ECO:0007669"/>
    <property type="project" value="UniProtKB-SubCell"/>
</dbReference>
<dbReference type="GO" id="GO:0045259">
    <property type="term" value="C:proton-transporting ATP synthase complex"/>
    <property type="evidence" value="ECO:0007669"/>
    <property type="project" value="UniProtKB-KW"/>
</dbReference>
<dbReference type="GO" id="GO:0005524">
    <property type="term" value="F:ATP binding"/>
    <property type="evidence" value="ECO:0007669"/>
    <property type="project" value="UniProtKB-UniRule"/>
</dbReference>
<dbReference type="GO" id="GO:0046933">
    <property type="term" value="F:proton-transporting ATP synthase activity, rotational mechanism"/>
    <property type="evidence" value="ECO:0007669"/>
    <property type="project" value="UniProtKB-UniRule"/>
</dbReference>
<dbReference type="CDD" id="cd12152">
    <property type="entry name" value="F1-ATPase_delta"/>
    <property type="match status" value="1"/>
</dbReference>
<dbReference type="Gene3D" id="2.60.15.10">
    <property type="entry name" value="F0F1 ATP synthase delta/epsilon subunit, N-terminal"/>
    <property type="match status" value="1"/>
</dbReference>
<dbReference type="HAMAP" id="MF_00530">
    <property type="entry name" value="ATP_synth_epsil_bac"/>
    <property type="match status" value="1"/>
</dbReference>
<dbReference type="InterPro" id="IPR001469">
    <property type="entry name" value="ATP_synth_F1_dsu/esu"/>
</dbReference>
<dbReference type="InterPro" id="IPR020546">
    <property type="entry name" value="ATP_synth_F1_dsu/esu_N"/>
</dbReference>
<dbReference type="InterPro" id="IPR036771">
    <property type="entry name" value="ATPsynth_dsu/esu_N"/>
</dbReference>
<dbReference type="NCBIfam" id="TIGR01216">
    <property type="entry name" value="ATP_synt_epsi"/>
    <property type="match status" value="1"/>
</dbReference>
<dbReference type="NCBIfam" id="NF009980">
    <property type="entry name" value="PRK13446.1"/>
    <property type="match status" value="1"/>
</dbReference>
<dbReference type="PANTHER" id="PTHR13822">
    <property type="entry name" value="ATP SYNTHASE DELTA/EPSILON CHAIN"/>
    <property type="match status" value="1"/>
</dbReference>
<dbReference type="PANTHER" id="PTHR13822:SF10">
    <property type="entry name" value="ATP SYNTHASE EPSILON CHAIN, CHLOROPLASTIC"/>
    <property type="match status" value="1"/>
</dbReference>
<dbReference type="Pfam" id="PF02823">
    <property type="entry name" value="ATP-synt_DE_N"/>
    <property type="match status" value="1"/>
</dbReference>
<dbReference type="SUPFAM" id="SSF51344">
    <property type="entry name" value="Epsilon subunit of F1F0-ATP synthase N-terminal domain"/>
    <property type="match status" value="1"/>
</dbReference>
<proteinExistence type="inferred from homology"/>
<sequence length="134" mass="14393">MPDTLELEVATPERELVREQVTEVQVPAAQGYLGVLPGHAPLLGLLGIGTLTYMVGGNKRHISVHGGFLEVLEDHVRVLADVAERAEEIDIQRAKAALERSQREALNPALGVDPAEALAATMRAEARLATADKK</sequence>
<gene>
    <name evidence="1" type="primary">atpC</name>
    <name type="ordered locus">Acid_0466</name>
</gene>
<name>ATPE_SOLUE</name>
<organism>
    <name type="scientific">Solibacter usitatus (strain Ellin6076)</name>
    <dbReference type="NCBI Taxonomy" id="234267"/>
    <lineage>
        <taxon>Bacteria</taxon>
        <taxon>Pseudomonadati</taxon>
        <taxon>Acidobacteriota</taxon>
        <taxon>Terriglobia</taxon>
        <taxon>Bryobacterales</taxon>
        <taxon>Solibacteraceae</taxon>
        <taxon>Candidatus Solibacter</taxon>
    </lineage>
</organism>